<feature type="chain" id="PRO_0000113315" description="Malate dehydrogenase">
    <location>
        <begin position="1"/>
        <end position="312"/>
    </location>
</feature>
<feature type="active site" description="Proton acceptor" evidence="1">
    <location>
        <position position="177"/>
    </location>
</feature>
<feature type="binding site" evidence="1">
    <location>
        <begin position="7"/>
        <end position="13"/>
    </location>
    <ligand>
        <name>NAD(+)</name>
        <dbReference type="ChEBI" id="CHEBI:57540"/>
    </ligand>
</feature>
<feature type="binding site" evidence="1">
    <location>
        <position position="34"/>
    </location>
    <ligand>
        <name>NAD(+)</name>
        <dbReference type="ChEBI" id="CHEBI:57540"/>
    </ligand>
</feature>
<feature type="binding site" evidence="1">
    <location>
        <position position="81"/>
    </location>
    <ligand>
        <name>substrate</name>
    </ligand>
</feature>
<feature type="binding site" evidence="1">
    <location>
        <position position="87"/>
    </location>
    <ligand>
        <name>substrate</name>
    </ligand>
</feature>
<feature type="binding site" evidence="1">
    <location>
        <position position="94"/>
    </location>
    <ligand>
        <name>NAD(+)</name>
        <dbReference type="ChEBI" id="CHEBI:57540"/>
    </ligand>
</feature>
<feature type="binding site" evidence="1">
    <location>
        <begin position="117"/>
        <end position="119"/>
    </location>
    <ligand>
        <name>NAD(+)</name>
        <dbReference type="ChEBI" id="CHEBI:57540"/>
    </ligand>
</feature>
<feature type="binding site" evidence="1">
    <location>
        <position position="119"/>
    </location>
    <ligand>
        <name>substrate</name>
    </ligand>
</feature>
<feature type="binding site" evidence="1">
    <location>
        <position position="153"/>
    </location>
    <ligand>
        <name>substrate</name>
    </ligand>
</feature>
<feature type="binding site" evidence="1">
    <location>
        <position position="227"/>
    </location>
    <ligand>
        <name>NAD(+)</name>
        <dbReference type="ChEBI" id="CHEBI:57540"/>
    </ligand>
</feature>
<feature type="mutagenesis site" description="Decreases the thermal stability." evidence="2">
    <original>H</original>
    <variation>Q</variation>
    <location>
        <position position="229"/>
    </location>
</feature>
<reference key="1">
    <citation type="journal article" date="2004" name="FEMS Microbiol. Lett.">
        <title>Differences in malate dehydrogenases from the obligately piezophilic deep-sea bacterium Moritella sp. strain 2D2 and the psychrophilic bacterium Moritella sp. strain 5710.</title>
        <authorList>
            <person name="Saito R."/>
            <person name="Nakayama A."/>
        </authorList>
    </citation>
    <scope>NUCLEOTIDE SEQUENCE [GENOMIC DNA]</scope>
    <scope>CATALYTIC ACTIVITY</scope>
    <scope>MUTAGENESIS OF HIS-229</scope>
</reference>
<dbReference type="EC" id="1.1.1.37"/>
<dbReference type="EMBL" id="AB097559">
    <property type="protein sequence ID" value="BAC77301.1"/>
    <property type="molecule type" value="Genomic_DNA"/>
</dbReference>
<dbReference type="SMR" id="Q7X3X5"/>
<dbReference type="BRENDA" id="1.1.1.37">
    <property type="organism ID" value="7318"/>
</dbReference>
<dbReference type="GO" id="GO:0005737">
    <property type="term" value="C:cytoplasm"/>
    <property type="evidence" value="ECO:0007669"/>
    <property type="project" value="TreeGrafter"/>
</dbReference>
<dbReference type="GO" id="GO:0030060">
    <property type="term" value="F:L-malate dehydrogenase (NAD+) activity"/>
    <property type="evidence" value="ECO:0007669"/>
    <property type="project" value="UniProtKB-UniRule"/>
</dbReference>
<dbReference type="GO" id="GO:0006108">
    <property type="term" value="P:malate metabolic process"/>
    <property type="evidence" value="ECO:0007669"/>
    <property type="project" value="InterPro"/>
</dbReference>
<dbReference type="GO" id="GO:0006099">
    <property type="term" value="P:tricarboxylic acid cycle"/>
    <property type="evidence" value="ECO:0007669"/>
    <property type="project" value="UniProtKB-UniRule"/>
</dbReference>
<dbReference type="CDD" id="cd01337">
    <property type="entry name" value="MDH_glyoxysomal_mitochondrial"/>
    <property type="match status" value="1"/>
</dbReference>
<dbReference type="FunFam" id="3.40.50.720:FF:000017">
    <property type="entry name" value="Malate dehydrogenase"/>
    <property type="match status" value="1"/>
</dbReference>
<dbReference type="FunFam" id="3.90.110.10:FF:000001">
    <property type="entry name" value="Malate dehydrogenase"/>
    <property type="match status" value="1"/>
</dbReference>
<dbReference type="Gene3D" id="3.90.110.10">
    <property type="entry name" value="Lactate dehydrogenase/glycoside hydrolase, family 4, C-terminal"/>
    <property type="match status" value="1"/>
</dbReference>
<dbReference type="Gene3D" id="3.40.50.720">
    <property type="entry name" value="NAD(P)-binding Rossmann-like Domain"/>
    <property type="match status" value="1"/>
</dbReference>
<dbReference type="HAMAP" id="MF_01516">
    <property type="entry name" value="Malate_dehydrog_1"/>
    <property type="match status" value="1"/>
</dbReference>
<dbReference type="InterPro" id="IPR001557">
    <property type="entry name" value="L-lactate/malate_DH"/>
</dbReference>
<dbReference type="InterPro" id="IPR022383">
    <property type="entry name" value="Lactate/malate_DH_C"/>
</dbReference>
<dbReference type="InterPro" id="IPR001236">
    <property type="entry name" value="Lactate/malate_DH_N"/>
</dbReference>
<dbReference type="InterPro" id="IPR015955">
    <property type="entry name" value="Lactate_DH/Glyco_Ohase_4_C"/>
</dbReference>
<dbReference type="InterPro" id="IPR001252">
    <property type="entry name" value="Malate_DH_AS"/>
</dbReference>
<dbReference type="InterPro" id="IPR010097">
    <property type="entry name" value="Malate_DH_type1"/>
</dbReference>
<dbReference type="InterPro" id="IPR023958">
    <property type="entry name" value="Malate_DH_type1_bac"/>
</dbReference>
<dbReference type="InterPro" id="IPR036291">
    <property type="entry name" value="NAD(P)-bd_dom_sf"/>
</dbReference>
<dbReference type="NCBIfam" id="TIGR01772">
    <property type="entry name" value="MDH_euk_gproteo"/>
    <property type="match status" value="1"/>
</dbReference>
<dbReference type="PANTHER" id="PTHR11540">
    <property type="entry name" value="MALATE AND LACTATE DEHYDROGENASE"/>
    <property type="match status" value="1"/>
</dbReference>
<dbReference type="PANTHER" id="PTHR11540:SF16">
    <property type="entry name" value="MALATE DEHYDROGENASE, MITOCHONDRIAL"/>
    <property type="match status" value="1"/>
</dbReference>
<dbReference type="Pfam" id="PF02866">
    <property type="entry name" value="Ldh_1_C"/>
    <property type="match status" value="1"/>
</dbReference>
<dbReference type="Pfam" id="PF00056">
    <property type="entry name" value="Ldh_1_N"/>
    <property type="match status" value="1"/>
</dbReference>
<dbReference type="PIRSF" id="PIRSF000102">
    <property type="entry name" value="Lac_mal_DH"/>
    <property type="match status" value="1"/>
</dbReference>
<dbReference type="SUPFAM" id="SSF56327">
    <property type="entry name" value="LDH C-terminal domain-like"/>
    <property type="match status" value="1"/>
</dbReference>
<dbReference type="SUPFAM" id="SSF51735">
    <property type="entry name" value="NAD(P)-binding Rossmann-fold domains"/>
    <property type="match status" value="1"/>
</dbReference>
<dbReference type="PROSITE" id="PS00068">
    <property type="entry name" value="MDH"/>
    <property type="match status" value="1"/>
</dbReference>
<organism>
    <name type="scientific">Moritella sp. (strain 2D2)</name>
    <dbReference type="NCBI Taxonomy" id="215801"/>
    <lineage>
        <taxon>Bacteria</taxon>
        <taxon>Pseudomonadati</taxon>
        <taxon>Pseudomonadota</taxon>
        <taxon>Gammaproteobacteria</taxon>
        <taxon>Alteromonadales</taxon>
        <taxon>Moritellaceae</taxon>
        <taxon>Moritella</taxon>
    </lineage>
</organism>
<accession>Q7X3X5</accession>
<sequence>MKVAVLGAAGGIGQALALLLKTQLPAGSELSLYDIAPVTPGVAVDLSHIPTDVTITGFSGIDPTAALVGADVVLISAGVARKPGMDRSDLFNINAGIIKNLASKCAEVCPTACIGIITNPVNTTVPIAAEVLKQAGVYDKRKLFGITTLDVIRSETFVSALKGISLADVAVPVIGGHSGATILPLLSQVKGVEFTAEEIATLTTRIQNAGTEVVEAKAGGGSATLSMGHAAARFGLSLVRALQGEKGIVECTYVDGGSEHATFFAQPVLLGKNGVEEVLAYGDLSDFETNARDAMLEELKANITLGEEFVAG</sequence>
<evidence type="ECO:0000250" key="1"/>
<evidence type="ECO:0000269" key="2">
    <source>
    </source>
</evidence>
<evidence type="ECO:0000305" key="3"/>
<keyword id="KW-0520">NAD</keyword>
<keyword id="KW-0560">Oxidoreductase</keyword>
<keyword id="KW-0816">Tricarboxylic acid cycle</keyword>
<gene>
    <name type="primary">mdh</name>
</gene>
<proteinExistence type="evidence at protein level"/>
<comment type="function">
    <text>Catalyzes the reversible oxidation of malate to oxaloacetate.</text>
</comment>
<comment type="catalytic activity">
    <reaction evidence="2">
        <text>(S)-malate + NAD(+) = oxaloacetate + NADH + H(+)</text>
        <dbReference type="Rhea" id="RHEA:21432"/>
        <dbReference type="ChEBI" id="CHEBI:15378"/>
        <dbReference type="ChEBI" id="CHEBI:15589"/>
        <dbReference type="ChEBI" id="CHEBI:16452"/>
        <dbReference type="ChEBI" id="CHEBI:57540"/>
        <dbReference type="ChEBI" id="CHEBI:57945"/>
        <dbReference type="EC" id="1.1.1.37"/>
    </reaction>
</comment>
<comment type="biophysicochemical properties">
    <phDependence>
        <text>Optimum pH is 9.5-10.0 for malate dehydrogenation, and 7.5-8.0 for oxaloacetate reduction.</text>
    </phDependence>
    <temperatureDependence>
        <text>Optimum temperature is 40 degrees Celsius.</text>
    </temperatureDependence>
</comment>
<comment type="subunit">
    <text evidence="1">Homodimer.</text>
</comment>
<comment type="similarity">
    <text evidence="3">Belongs to the LDH/MDH superfamily. MDH type 1 family.</text>
</comment>
<name>MDH_MORS2</name>
<protein>
    <recommendedName>
        <fullName>Malate dehydrogenase</fullName>
        <ecNumber>1.1.1.37</ecNumber>
    </recommendedName>
</protein>